<proteinExistence type="inferred from homology"/>
<evidence type="ECO:0000255" key="1">
    <source>
        <dbReference type="HAMAP-Rule" id="MF_01622"/>
    </source>
</evidence>
<protein>
    <recommendedName>
        <fullName evidence="1">tRNA 2-selenouridine synthase</fullName>
        <ecNumber evidence="1">2.9.1.3</ecNumber>
    </recommendedName>
</protein>
<gene>
    <name evidence="1" type="primary">selU</name>
    <name type="ordered locus">SEN0494</name>
</gene>
<organism>
    <name type="scientific">Salmonella enteritidis PT4 (strain P125109)</name>
    <dbReference type="NCBI Taxonomy" id="550537"/>
    <lineage>
        <taxon>Bacteria</taxon>
        <taxon>Pseudomonadati</taxon>
        <taxon>Pseudomonadota</taxon>
        <taxon>Gammaproteobacteria</taxon>
        <taxon>Enterobacterales</taxon>
        <taxon>Enterobacteriaceae</taxon>
        <taxon>Salmonella</taxon>
    </lineage>
</organism>
<feature type="chain" id="PRO_1000186081" description="tRNA 2-selenouridine synthase">
    <location>
        <begin position="1"/>
        <end position="364"/>
    </location>
</feature>
<feature type="domain" description="Rhodanese" evidence="1">
    <location>
        <begin position="14"/>
        <end position="137"/>
    </location>
</feature>
<feature type="active site" description="S-selanylcysteine intermediate" evidence="1">
    <location>
        <position position="97"/>
    </location>
</feature>
<comment type="function">
    <text evidence="1">Involved in the post-transcriptional modification of the uridine at the wobble position (U34) of tRNA(Lys), tRNA(Glu) and tRNA(Gln). Catalyzes the conversion of 2-thiouridine (S2U-RNA) to 2-selenouridine (Se2U-RNA). Acts in a two-step process involving geranylation of 2-thiouridine (S2U) to S-geranyl-2-thiouridine (geS2U) and subsequent selenation of the latter derivative to 2-selenouridine (Se2U) in the tRNA chain.</text>
</comment>
<comment type="catalytic activity">
    <reaction evidence="1">
        <text>5-methylaminomethyl-2-thiouridine(34) in tRNA + selenophosphate + (2E)-geranyl diphosphate + H2O + H(+) = 5-methylaminomethyl-2-selenouridine(34) in tRNA + (2E)-thiogeraniol + phosphate + diphosphate</text>
        <dbReference type="Rhea" id="RHEA:42716"/>
        <dbReference type="Rhea" id="RHEA-COMP:10195"/>
        <dbReference type="Rhea" id="RHEA-COMP:10196"/>
        <dbReference type="ChEBI" id="CHEBI:15377"/>
        <dbReference type="ChEBI" id="CHEBI:15378"/>
        <dbReference type="ChEBI" id="CHEBI:16144"/>
        <dbReference type="ChEBI" id="CHEBI:33019"/>
        <dbReference type="ChEBI" id="CHEBI:43474"/>
        <dbReference type="ChEBI" id="CHEBI:58057"/>
        <dbReference type="ChEBI" id="CHEBI:74455"/>
        <dbReference type="ChEBI" id="CHEBI:82743"/>
        <dbReference type="ChEBI" id="CHEBI:143703"/>
        <dbReference type="EC" id="2.9.1.3"/>
    </reaction>
    <physiologicalReaction direction="left-to-right" evidence="1">
        <dbReference type="Rhea" id="RHEA:42717"/>
    </physiologicalReaction>
</comment>
<comment type="catalytic activity">
    <reaction evidence="1">
        <text>5-methylaminomethyl-2-thiouridine(34) in tRNA + (2E)-geranyl diphosphate = 5-methylaminomethyl-S-(2E)-geranyl-thiouridine(34) in tRNA + diphosphate</text>
        <dbReference type="Rhea" id="RHEA:14085"/>
        <dbReference type="Rhea" id="RHEA-COMP:10195"/>
        <dbReference type="Rhea" id="RHEA-COMP:14654"/>
        <dbReference type="ChEBI" id="CHEBI:33019"/>
        <dbReference type="ChEBI" id="CHEBI:58057"/>
        <dbReference type="ChEBI" id="CHEBI:74455"/>
        <dbReference type="ChEBI" id="CHEBI:140632"/>
    </reaction>
    <physiologicalReaction direction="left-to-right" evidence="1">
        <dbReference type="Rhea" id="RHEA:14086"/>
    </physiologicalReaction>
</comment>
<comment type="catalytic activity">
    <reaction evidence="1">
        <text>5-methylaminomethyl-S-(2E)-geranyl-thiouridine(34) in tRNA + selenophosphate + H(+) = 5-methylaminomethyl-2-(Se-phospho)selenouridine(34) in tRNA + (2E)-thiogeraniol</text>
        <dbReference type="Rhea" id="RHEA:60172"/>
        <dbReference type="Rhea" id="RHEA-COMP:14654"/>
        <dbReference type="Rhea" id="RHEA-COMP:15523"/>
        <dbReference type="ChEBI" id="CHEBI:15378"/>
        <dbReference type="ChEBI" id="CHEBI:16144"/>
        <dbReference type="ChEBI" id="CHEBI:140632"/>
        <dbReference type="ChEBI" id="CHEBI:143702"/>
        <dbReference type="ChEBI" id="CHEBI:143703"/>
    </reaction>
    <physiologicalReaction direction="left-to-right" evidence="1">
        <dbReference type="Rhea" id="RHEA:60173"/>
    </physiologicalReaction>
</comment>
<comment type="catalytic activity">
    <reaction evidence="1">
        <text>5-methylaminomethyl-2-(Se-phospho)selenouridine(34) in tRNA + H2O = 5-methylaminomethyl-2-selenouridine(34) in tRNA + phosphate</text>
        <dbReference type="Rhea" id="RHEA:60176"/>
        <dbReference type="Rhea" id="RHEA-COMP:10196"/>
        <dbReference type="Rhea" id="RHEA-COMP:15523"/>
        <dbReference type="ChEBI" id="CHEBI:15377"/>
        <dbReference type="ChEBI" id="CHEBI:43474"/>
        <dbReference type="ChEBI" id="CHEBI:82743"/>
        <dbReference type="ChEBI" id="CHEBI:143702"/>
    </reaction>
    <physiologicalReaction direction="left-to-right" evidence="1">
        <dbReference type="Rhea" id="RHEA:60177"/>
    </physiologicalReaction>
</comment>
<comment type="subunit">
    <text evidence="1">Monomer.</text>
</comment>
<comment type="similarity">
    <text evidence="1">Belongs to the SelU family.</text>
</comment>
<name>SELU_SALEP</name>
<accession>B5QUA2</accession>
<keyword id="KW-0711">Selenium</keyword>
<keyword id="KW-0808">Transferase</keyword>
<reference key="1">
    <citation type="journal article" date="2008" name="Genome Res.">
        <title>Comparative genome analysis of Salmonella enteritidis PT4 and Salmonella gallinarum 287/91 provides insights into evolutionary and host adaptation pathways.</title>
        <authorList>
            <person name="Thomson N.R."/>
            <person name="Clayton D.J."/>
            <person name="Windhorst D."/>
            <person name="Vernikos G."/>
            <person name="Davidson S."/>
            <person name="Churcher C."/>
            <person name="Quail M.A."/>
            <person name="Stevens M."/>
            <person name="Jones M.A."/>
            <person name="Watson M."/>
            <person name="Barron A."/>
            <person name="Layton A."/>
            <person name="Pickard D."/>
            <person name="Kingsley R.A."/>
            <person name="Bignell A."/>
            <person name="Clark L."/>
            <person name="Harris B."/>
            <person name="Ormond D."/>
            <person name="Abdellah Z."/>
            <person name="Brooks K."/>
            <person name="Cherevach I."/>
            <person name="Chillingworth T."/>
            <person name="Woodward J."/>
            <person name="Norberczak H."/>
            <person name="Lord A."/>
            <person name="Arrowsmith C."/>
            <person name="Jagels K."/>
            <person name="Moule S."/>
            <person name="Mungall K."/>
            <person name="Saunders M."/>
            <person name="Whitehead S."/>
            <person name="Chabalgoity J.A."/>
            <person name="Maskell D."/>
            <person name="Humphreys T."/>
            <person name="Roberts M."/>
            <person name="Barrow P.A."/>
            <person name="Dougan G."/>
            <person name="Parkhill J."/>
        </authorList>
    </citation>
    <scope>NUCLEOTIDE SEQUENCE [LARGE SCALE GENOMIC DNA]</scope>
    <source>
        <strain>P125109</strain>
    </source>
</reference>
<sequence length="364" mass="41342">MQDRQKAQDYRALLLADTPLIDVRAPIEFEQGAMPGAINLPLMMDDERAAVGTCYKRQGADAALALGHRLVCGDIRQQRLEAWKAAYQRFPNGYLCCARGGQRSHIVQRWLQETGIDCPLIEGGYKALRQTAIQATWQLAQKPILLIGGCTGSGKTQLVRQQPNGVDLEGLARHRGSSFGRTLNPQLSQASFENKLAVELLKINARQTLKRWVLEDEGRTIGANHLPECLRERMAQAPIAVVEDPFALRLERLREEYFIRMHHDFTHAYGDEAGWQAYSEYLHHGLFAIRRRLGLQRFAELTDTLDRALAEQLSSGSTDGHMAWLVPLLNEYYDPMYRYQLEKKAANIVFRGTWQEVANWLKAQ</sequence>
<dbReference type="EC" id="2.9.1.3" evidence="1"/>
<dbReference type="EMBL" id="AM933172">
    <property type="protein sequence ID" value="CAR32080.1"/>
    <property type="molecule type" value="Genomic_DNA"/>
</dbReference>
<dbReference type="SMR" id="B5QUA2"/>
<dbReference type="KEGG" id="set:SEN0494"/>
<dbReference type="HOGENOM" id="CLU_043456_1_0_6"/>
<dbReference type="Proteomes" id="UP000000613">
    <property type="component" value="Chromosome"/>
</dbReference>
<dbReference type="GO" id="GO:0016765">
    <property type="term" value="F:transferase activity, transferring alkyl or aryl (other than methyl) groups"/>
    <property type="evidence" value="ECO:0007669"/>
    <property type="project" value="UniProtKB-UniRule"/>
</dbReference>
<dbReference type="GO" id="GO:0043828">
    <property type="term" value="F:tRNA 2-selenouridine synthase activity"/>
    <property type="evidence" value="ECO:0007669"/>
    <property type="project" value="UniProtKB-EC"/>
</dbReference>
<dbReference type="GO" id="GO:0002098">
    <property type="term" value="P:tRNA wobble uridine modification"/>
    <property type="evidence" value="ECO:0007669"/>
    <property type="project" value="UniProtKB-UniRule"/>
</dbReference>
<dbReference type="CDD" id="cd01520">
    <property type="entry name" value="RHOD_YbbB"/>
    <property type="match status" value="1"/>
</dbReference>
<dbReference type="FunFam" id="3.40.250.10:FF:000009">
    <property type="entry name" value="tRNA 2-selenouridine/geranyl-2-thiouridine synthase"/>
    <property type="match status" value="1"/>
</dbReference>
<dbReference type="Gene3D" id="3.40.250.10">
    <property type="entry name" value="Rhodanese-like domain"/>
    <property type="match status" value="1"/>
</dbReference>
<dbReference type="HAMAP" id="MF_01622">
    <property type="entry name" value="tRNA_sel_U_synth"/>
    <property type="match status" value="1"/>
</dbReference>
<dbReference type="InterPro" id="IPR001763">
    <property type="entry name" value="Rhodanese-like_dom"/>
</dbReference>
<dbReference type="InterPro" id="IPR036873">
    <property type="entry name" value="Rhodanese-like_dom_sf"/>
</dbReference>
<dbReference type="InterPro" id="IPR017582">
    <property type="entry name" value="SelU"/>
</dbReference>
<dbReference type="NCBIfam" id="NF008749">
    <property type="entry name" value="PRK11784.1-1"/>
    <property type="match status" value="1"/>
</dbReference>
<dbReference type="NCBIfam" id="NF008751">
    <property type="entry name" value="PRK11784.1-3"/>
    <property type="match status" value="1"/>
</dbReference>
<dbReference type="NCBIfam" id="TIGR03167">
    <property type="entry name" value="tRNA_sel_U_synt"/>
    <property type="match status" value="1"/>
</dbReference>
<dbReference type="PANTHER" id="PTHR30401">
    <property type="entry name" value="TRNA 2-SELENOURIDINE SYNTHASE"/>
    <property type="match status" value="1"/>
</dbReference>
<dbReference type="PANTHER" id="PTHR30401:SF0">
    <property type="entry name" value="TRNA 2-SELENOURIDINE SYNTHASE"/>
    <property type="match status" value="1"/>
</dbReference>
<dbReference type="Pfam" id="PF00581">
    <property type="entry name" value="Rhodanese"/>
    <property type="match status" value="1"/>
</dbReference>
<dbReference type="SMART" id="SM00450">
    <property type="entry name" value="RHOD"/>
    <property type="match status" value="1"/>
</dbReference>
<dbReference type="SUPFAM" id="SSF52821">
    <property type="entry name" value="Rhodanese/Cell cycle control phosphatase"/>
    <property type="match status" value="1"/>
</dbReference>
<dbReference type="PROSITE" id="PS50206">
    <property type="entry name" value="RHODANESE_3"/>
    <property type="match status" value="1"/>
</dbReference>